<proteinExistence type="inferred from homology"/>
<feature type="chain" id="PRO_1000090627" description="Phospho-N-acetylmuramoyl-pentapeptide-transferase">
    <location>
        <begin position="1"/>
        <end position="365"/>
    </location>
</feature>
<feature type="transmembrane region" description="Helical" evidence="1">
    <location>
        <begin position="22"/>
        <end position="42"/>
    </location>
</feature>
<feature type="transmembrane region" description="Helical" evidence="1">
    <location>
        <begin position="74"/>
        <end position="94"/>
    </location>
</feature>
<feature type="transmembrane region" description="Helical" evidence="1">
    <location>
        <begin position="95"/>
        <end position="115"/>
    </location>
</feature>
<feature type="transmembrane region" description="Helical" evidence="1">
    <location>
        <begin position="134"/>
        <end position="154"/>
    </location>
</feature>
<feature type="transmembrane region" description="Helical" evidence="1">
    <location>
        <begin position="168"/>
        <end position="188"/>
    </location>
</feature>
<feature type="transmembrane region" description="Helical" evidence="1">
    <location>
        <begin position="201"/>
        <end position="221"/>
    </location>
</feature>
<feature type="transmembrane region" description="Helical" evidence="1">
    <location>
        <begin position="240"/>
        <end position="260"/>
    </location>
</feature>
<feature type="transmembrane region" description="Helical" evidence="1">
    <location>
        <begin position="267"/>
        <end position="287"/>
    </location>
</feature>
<feature type="transmembrane region" description="Helical" evidence="1">
    <location>
        <begin position="292"/>
        <end position="312"/>
    </location>
</feature>
<feature type="transmembrane region" description="Helical" evidence="1">
    <location>
        <begin position="342"/>
        <end position="362"/>
    </location>
</feature>
<accession>B2SDR9</accession>
<evidence type="ECO:0000255" key="1">
    <source>
        <dbReference type="HAMAP-Rule" id="MF_00038"/>
    </source>
</evidence>
<dbReference type="EC" id="2.7.8.13" evidence="1"/>
<dbReference type="EMBL" id="CP000915">
    <property type="protein sequence ID" value="ACD31283.1"/>
    <property type="molecule type" value="Genomic_DNA"/>
</dbReference>
<dbReference type="SMR" id="B2SDR9"/>
<dbReference type="KEGG" id="ftm:FTM_1453"/>
<dbReference type="HOGENOM" id="CLU_023982_0_0_6"/>
<dbReference type="UniPathway" id="UPA00219"/>
<dbReference type="GO" id="GO:0005886">
    <property type="term" value="C:plasma membrane"/>
    <property type="evidence" value="ECO:0007669"/>
    <property type="project" value="UniProtKB-SubCell"/>
</dbReference>
<dbReference type="GO" id="GO:0046872">
    <property type="term" value="F:metal ion binding"/>
    <property type="evidence" value="ECO:0007669"/>
    <property type="project" value="UniProtKB-KW"/>
</dbReference>
<dbReference type="GO" id="GO:0008963">
    <property type="term" value="F:phospho-N-acetylmuramoyl-pentapeptide-transferase activity"/>
    <property type="evidence" value="ECO:0007669"/>
    <property type="project" value="UniProtKB-UniRule"/>
</dbReference>
<dbReference type="GO" id="GO:0051992">
    <property type="term" value="F:UDP-N-acetylmuramoyl-L-alanyl-D-glutamyl-meso-2,6-diaminopimelyl-D-alanyl-D-alanine:undecaprenyl-phosphate transferase activity"/>
    <property type="evidence" value="ECO:0007669"/>
    <property type="project" value="RHEA"/>
</dbReference>
<dbReference type="GO" id="GO:0051301">
    <property type="term" value="P:cell division"/>
    <property type="evidence" value="ECO:0007669"/>
    <property type="project" value="UniProtKB-KW"/>
</dbReference>
<dbReference type="GO" id="GO:0071555">
    <property type="term" value="P:cell wall organization"/>
    <property type="evidence" value="ECO:0007669"/>
    <property type="project" value="UniProtKB-KW"/>
</dbReference>
<dbReference type="GO" id="GO:0009252">
    <property type="term" value="P:peptidoglycan biosynthetic process"/>
    <property type="evidence" value="ECO:0007669"/>
    <property type="project" value="UniProtKB-UniRule"/>
</dbReference>
<dbReference type="GO" id="GO:0008360">
    <property type="term" value="P:regulation of cell shape"/>
    <property type="evidence" value="ECO:0007669"/>
    <property type="project" value="UniProtKB-KW"/>
</dbReference>
<dbReference type="CDD" id="cd06852">
    <property type="entry name" value="GT_MraY"/>
    <property type="match status" value="1"/>
</dbReference>
<dbReference type="HAMAP" id="MF_00038">
    <property type="entry name" value="MraY"/>
    <property type="match status" value="1"/>
</dbReference>
<dbReference type="InterPro" id="IPR000715">
    <property type="entry name" value="Glycosyl_transferase_4"/>
</dbReference>
<dbReference type="InterPro" id="IPR003524">
    <property type="entry name" value="PNAcMuramoyl-5peptid_Trfase"/>
</dbReference>
<dbReference type="InterPro" id="IPR018480">
    <property type="entry name" value="PNAcMuramoyl-5peptid_Trfase_CS"/>
</dbReference>
<dbReference type="NCBIfam" id="TIGR00445">
    <property type="entry name" value="mraY"/>
    <property type="match status" value="1"/>
</dbReference>
<dbReference type="PANTHER" id="PTHR22926">
    <property type="entry name" value="PHOSPHO-N-ACETYLMURAMOYL-PENTAPEPTIDE-TRANSFERASE"/>
    <property type="match status" value="1"/>
</dbReference>
<dbReference type="PANTHER" id="PTHR22926:SF5">
    <property type="entry name" value="PHOSPHO-N-ACETYLMURAMOYL-PENTAPEPTIDE-TRANSFERASE HOMOLOG"/>
    <property type="match status" value="1"/>
</dbReference>
<dbReference type="Pfam" id="PF00953">
    <property type="entry name" value="Glycos_transf_4"/>
    <property type="match status" value="1"/>
</dbReference>
<dbReference type="Pfam" id="PF10555">
    <property type="entry name" value="MraY_sig1"/>
    <property type="match status" value="1"/>
</dbReference>
<dbReference type="PROSITE" id="PS01347">
    <property type="entry name" value="MRAY_1"/>
    <property type="match status" value="1"/>
</dbReference>
<dbReference type="PROSITE" id="PS01348">
    <property type="entry name" value="MRAY_2"/>
    <property type="match status" value="1"/>
</dbReference>
<sequence>MLIYLFEWLSHYFKGLEVFSSYISVRIIMISITSLLITLALGRPMISWLQKMQIGQIVRDDGPQSHFSKRNTPTMGGVLILSSVIISCLLWGDLTSIYLWILILVVIFFGAIGFFDDYLKLVLKHPKGLRAKHKFALQSIFSIVLAIVLFYLLSKNGQMSLSIPFSKSLYIPMGIVIFVVLAFFIINGSSNAVNLTDGLDGLAIVPVVLVAAGLGIYAYIETNSTLANYLLFNYLGNPGLAEVAVFCAAVCGSGLAFLWFNSHPAEVFMGDVGSLTLGAVLGVIAVMVRQELIFFIMGLLFVVEALSVMLQVGSYKLRNGKRIFRMAPIHHHFELKGWPETKVVIRFWIISLILFLIGLAAIKVR</sequence>
<comment type="function">
    <text evidence="1">Catalyzes the initial step of the lipid cycle reactions in the biosynthesis of the cell wall peptidoglycan: transfers peptidoglycan precursor phospho-MurNAc-pentapeptide from UDP-MurNAc-pentapeptide onto the lipid carrier undecaprenyl phosphate, yielding undecaprenyl-pyrophosphoryl-MurNAc-pentapeptide, known as lipid I.</text>
</comment>
<comment type="catalytic activity">
    <reaction evidence="1">
        <text>UDP-N-acetyl-alpha-D-muramoyl-L-alanyl-gamma-D-glutamyl-meso-2,6-diaminopimeloyl-D-alanyl-D-alanine + di-trans,octa-cis-undecaprenyl phosphate = di-trans,octa-cis-undecaprenyl diphospho-N-acetyl-alpha-D-muramoyl-L-alanyl-D-glutamyl-meso-2,6-diaminopimeloyl-D-alanyl-D-alanine + UMP</text>
        <dbReference type="Rhea" id="RHEA:28386"/>
        <dbReference type="ChEBI" id="CHEBI:57865"/>
        <dbReference type="ChEBI" id="CHEBI:60392"/>
        <dbReference type="ChEBI" id="CHEBI:61386"/>
        <dbReference type="ChEBI" id="CHEBI:61387"/>
        <dbReference type="EC" id="2.7.8.13"/>
    </reaction>
</comment>
<comment type="cofactor">
    <cofactor evidence="1">
        <name>Mg(2+)</name>
        <dbReference type="ChEBI" id="CHEBI:18420"/>
    </cofactor>
</comment>
<comment type="pathway">
    <text evidence="1">Cell wall biogenesis; peptidoglycan biosynthesis.</text>
</comment>
<comment type="subcellular location">
    <subcellularLocation>
        <location evidence="1">Cell inner membrane</location>
        <topology evidence="1">Multi-pass membrane protein</topology>
    </subcellularLocation>
</comment>
<comment type="similarity">
    <text evidence="1">Belongs to the glycosyltransferase 4 family. MraY subfamily.</text>
</comment>
<reference key="1">
    <citation type="journal article" date="2009" name="PLoS Pathog.">
        <title>Molecular evolutionary consequences of niche restriction in Francisella tularensis, a facultative intracellular pathogen.</title>
        <authorList>
            <person name="Larsson P."/>
            <person name="Elfsmark D."/>
            <person name="Svensson K."/>
            <person name="Wikstroem P."/>
            <person name="Forsman M."/>
            <person name="Brettin T."/>
            <person name="Keim P."/>
            <person name="Johansson A."/>
        </authorList>
    </citation>
    <scope>NUCLEOTIDE SEQUENCE [LARGE SCALE GENOMIC DNA]</scope>
    <source>
        <strain>FSC147</strain>
    </source>
</reference>
<keyword id="KW-0131">Cell cycle</keyword>
<keyword id="KW-0132">Cell division</keyword>
<keyword id="KW-0997">Cell inner membrane</keyword>
<keyword id="KW-1003">Cell membrane</keyword>
<keyword id="KW-0133">Cell shape</keyword>
<keyword id="KW-0961">Cell wall biogenesis/degradation</keyword>
<keyword id="KW-0460">Magnesium</keyword>
<keyword id="KW-0472">Membrane</keyword>
<keyword id="KW-0479">Metal-binding</keyword>
<keyword id="KW-0573">Peptidoglycan synthesis</keyword>
<keyword id="KW-0808">Transferase</keyword>
<keyword id="KW-0812">Transmembrane</keyword>
<keyword id="KW-1133">Transmembrane helix</keyword>
<name>MRAY_FRATM</name>
<gene>
    <name evidence="1" type="primary">mraY</name>
    <name type="ordered locus">FTM_1453</name>
</gene>
<protein>
    <recommendedName>
        <fullName evidence="1">Phospho-N-acetylmuramoyl-pentapeptide-transferase</fullName>
        <ecNumber evidence="1">2.7.8.13</ecNumber>
    </recommendedName>
    <alternativeName>
        <fullName evidence="1">UDP-MurNAc-pentapeptide phosphotransferase</fullName>
    </alternativeName>
</protein>
<organism>
    <name type="scientific">Francisella tularensis subsp. mediasiatica (strain FSC147)</name>
    <dbReference type="NCBI Taxonomy" id="441952"/>
    <lineage>
        <taxon>Bacteria</taxon>
        <taxon>Pseudomonadati</taxon>
        <taxon>Pseudomonadota</taxon>
        <taxon>Gammaproteobacteria</taxon>
        <taxon>Thiotrichales</taxon>
        <taxon>Francisellaceae</taxon>
        <taxon>Francisella</taxon>
    </lineage>
</organism>